<protein>
    <recommendedName>
        <fullName evidence="11">Protein TIFY 6b</fullName>
        <shortName evidence="9">OsTIFY6b</shortName>
    </recommendedName>
    <alternativeName>
        <fullName evidence="11">Jasmonate ZIM domain-containing protein 4</fullName>
        <shortName evidence="9">OsJAZ4</shortName>
    </alternativeName>
    <alternativeName>
        <fullName evidence="10">OsJAZ8</fullName>
    </alternativeName>
</protein>
<sequence length="416" mass="43612">MERDFLGAIGKDEEQRRHAEERKESDYFGAGGGAAAAAMDWSFASRAALMSFRSSSSAAAAAAREETRELAFPHFSALDGAKMQQASHVLARQKSFGAESHGIPQYAAAAAVHGAHRGQPPHVLNGARVIPASSPFNPNNPMFRVQSSPNLPNAVGAGGGAFKQPPFAMGNAVAGSTVGVYGTRDMPKAKAAQLTIFYAGSVNVFNNVSPEKAQELMFLASRGSLPSAPTTVARMPEAHVFPPAKVTVPEVSPTKPMMLQKPQLVSSPVPAISKPISVVSQATSLPRSASSSNVDSNVTKSSGPLVVPPTSLPPPAQPETLATTTAAAIMPRAVPQARKASLARFLEKRKERVTTVAPYPLAKSPLESSDTMGSANDNKSSCTDIALSSNRDESLSLGQPRTISFCEESPSTKLQI</sequence>
<dbReference type="EMBL" id="AP005321">
    <property type="protein sequence ID" value="BAD28519.1"/>
    <property type="molecule type" value="Genomic_DNA"/>
</dbReference>
<dbReference type="EMBL" id="AP008215">
    <property type="protein sequence ID" value="BAF25035.1"/>
    <property type="molecule type" value="Genomic_DNA"/>
</dbReference>
<dbReference type="EMBL" id="AP014965">
    <property type="protein sequence ID" value="BAT07974.1"/>
    <property type="molecule type" value="Genomic_DNA"/>
</dbReference>
<dbReference type="EMBL" id="CM000146">
    <property type="protein sequence ID" value="EEE69666.1"/>
    <property type="molecule type" value="Genomic_DNA"/>
</dbReference>
<dbReference type="EMBL" id="AK065170">
    <property type="protein sequence ID" value="BAG89397.1"/>
    <property type="molecule type" value="mRNA"/>
</dbReference>
<dbReference type="RefSeq" id="XP_015612402.1">
    <property type="nucleotide sequence ID" value="XM_015756916.1"/>
</dbReference>
<dbReference type="SMR" id="Q6ES51"/>
<dbReference type="FunCoup" id="Q6ES51">
    <property type="interactions" value="1071"/>
</dbReference>
<dbReference type="STRING" id="39947.Q6ES51"/>
<dbReference type="PaxDb" id="39947-Q6ES51"/>
<dbReference type="EnsemblPlants" id="Os09t0401300-01">
    <property type="protein sequence ID" value="Os09t0401300-01"/>
    <property type="gene ID" value="Os09g0401300"/>
</dbReference>
<dbReference type="Gramene" id="Os09t0401300-01">
    <property type="protein sequence ID" value="Os09t0401300-01"/>
    <property type="gene ID" value="Os09g0401300"/>
</dbReference>
<dbReference type="KEGG" id="dosa:Os09g0401300"/>
<dbReference type="eggNOG" id="ENOG502QQDB">
    <property type="taxonomic scope" value="Eukaryota"/>
</dbReference>
<dbReference type="HOGENOM" id="CLU_047894_1_0_1"/>
<dbReference type="InParanoid" id="Q6ES51"/>
<dbReference type="OMA" id="NQNNPMF"/>
<dbReference type="OrthoDB" id="1939212at2759"/>
<dbReference type="PlantReactome" id="R-OSA-6787011">
    <property type="pathway name" value="Jasmonic acid signaling"/>
</dbReference>
<dbReference type="PlantReactome" id="R-OSA-6788019">
    <property type="pathway name" value="Salicylic acid signaling"/>
</dbReference>
<dbReference type="Proteomes" id="UP000000763">
    <property type="component" value="Chromosome 9"/>
</dbReference>
<dbReference type="Proteomes" id="UP000007752">
    <property type="component" value="Chromosome 9"/>
</dbReference>
<dbReference type="Proteomes" id="UP000059680">
    <property type="component" value="Chromosome 9"/>
</dbReference>
<dbReference type="ExpressionAtlas" id="Q6ES51">
    <property type="expression patterns" value="baseline and differential"/>
</dbReference>
<dbReference type="GO" id="GO:0005634">
    <property type="term" value="C:nucleus"/>
    <property type="evidence" value="ECO:0000318"/>
    <property type="project" value="GO_Central"/>
</dbReference>
<dbReference type="GO" id="GO:0031347">
    <property type="term" value="P:regulation of defense response"/>
    <property type="evidence" value="ECO:0000318"/>
    <property type="project" value="GO_Central"/>
</dbReference>
<dbReference type="GO" id="GO:2000022">
    <property type="term" value="P:regulation of jasmonic acid mediated signaling pathway"/>
    <property type="evidence" value="ECO:0000318"/>
    <property type="project" value="GO_Central"/>
</dbReference>
<dbReference type="GO" id="GO:0009611">
    <property type="term" value="P:response to wounding"/>
    <property type="evidence" value="ECO:0000318"/>
    <property type="project" value="GO_Central"/>
</dbReference>
<dbReference type="InterPro" id="IPR018467">
    <property type="entry name" value="CCT_CS"/>
</dbReference>
<dbReference type="InterPro" id="IPR040390">
    <property type="entry name" value="TIFY/JAZ"/>
</dbReference>
<dbReference type="InterPro" id="IPR010399">
    <property type="entry name" value="Tify_dom"/>
</dbReference>
<dbReference type="PANTHER" id="PTHR33077">
    <property type="entry name" value="PROTEIN TIFY 4A-RELATED-RELATED"/>
    <property type="match status" value="1"/>
</dbReference>
<dbReference type="PANTHER" id="PTHR33077:SF155">
    <property type="entry name" value="PROTEIN TIFY 6B"/>
    <property type="match status" value="1"/>
</dbReference>
<dbReference type="Pfam" id="PF09425">
    <property type="entry name" value="Jas_motif"/>
    <property type="match status" value="1"/>
</dbReference>
<dbReference type="Pfam" id="PF06200">
    <property type="entry name" value="tify"/>
    <property type="match status" value="1"/>
</dbReference>
<dbReference type="SMART" id="SM00979">
    <property type="entry name" value="TIFY"/>
    <property type="match status" value="1"/>
</dbReference>
<dbReference type="PROSITE" id="PS51320">
    <property type="entry name" value="TIFY"/>
    <property type="match status" value="1"/>
</dbReference>
<reference key="1">
    <citation type="journal article" date="2005" name="Nature">
        <title>The map-based sequence of the rice genome.</title>
        <authorList>
            <consortium name="International rice genome sequencing project (IRGSP)"/>
        </authorList>
    </citation>
    <scope>NUCLEOTIDE SEQUENCE [LARGE SCALE GENOMIC DNA]</scope>
    <source>
        <strain>cv. Nipponbare</strain>
    </source>
</reference>
<reference key="2">
    <citation type="journal article" date="2008" name="Nucleic Acids Res.">
        <title>The rice annotation project database (RAP-DB): 2008 update.</title>
        <authorList>
            <consortium name="The rice annotation project (RAP)"/>
        </authorList>
    </citation>
    <scope>GENOME REANNOTATION</scope>
    <source>
        <strain>cv. Nipponbare</strain>
    </source>
</reference>
<reference key="3">
    <citation type="journal article" date="2013" name="Rice">
        <title>Improvement of the Oryza sativa Nipponbare reference genome using next generation sequence and optical map data.</title>
        <authorList>
            <person name="Kawahara Y."/>
            <person name="de la Bastide M."/>
            <person name="Hamilton J.P."/>
            <person name="Kanamori H."/>
            <person name="McCombie W.R."/>
            <person name="Ouyang S."/>
            <person name="Schwartz D.C."/>
            <person name="Tanaka T."/>
            <person name="Wu J."/>
            <person name="Zhou S."/>
            <person name="Childs K.L."/>
            <person name="Davidson R.M."/>
            <person name="Lin H."/>
            <person name="Quesada-Ocampo L."/>
            <person name="Vaillancourt B."/>
            <person name="Sakai H."/>
            <person name="Lee S.S."/>
            <person name="Kim J."/>
            <person name="Numa H."/>
            <person name="Itoh T."/>
            <person name="Buell C.R."/>
            <person name="Matsumoto T."/>
        </authorList>
    </citation>
    <scope>GENOME REANNOTATION</scope>
    <source>
        <strain>cv. Nipponbare</strain>
    </source>
</reference>
<reference key="4">
    <citation type="journal article" date="2005" name="PLoS Biol.">
        <title>The genomes of Oryza sativa: a history of duplications.</title>
        <authorList>
            <person name="Yu J."/>
            <person name="Wang J."/>
            <person name="Lin W."/>
            <person name="Li S."/>
            <person name="Li H."/>
            <person name="Zhou J."/>
            <person name="Ni P."/>
            <person name="Dong W."/>
            <person name="Hu S."/>
            <person name="Zeng C."/>
            <person name="Zhang J."/>
            <person name="Zhang Y."/>
            <person name="Li R."/>
            <person name="Xu Z."/>
            <person name="Li S."/>
            <person name="Li X."/>
            <person name="Zheng H."/>
            <person name="Cong L."/>
            <person name="Lin L."/>
            <person name="Yin J."/>
            <person name="Geng J."/>
            <person name="Li G."/>
            <person name="Shi J."/>
            <person name="Liu J."/>
            <person name="Lv H."/>
            <person name="Li J."/>
            <person name="Wang J."/>
            <person name="Deng Y."/>
            <person name="Ran L."/>
            <person name="Shi X."/>
            <person name="Wang X."/>
            <person name="Wu Q."/>
            <person name="Li C."/>
            <person name="Ren X."/>
            <person name="Wang J."/>
            <person name="Wang X."/>
            <person name="Li D."/>
            <person name="Liu D."/>
            <person name="Zhang X."/>
            <person name="Ji Z."/>
            <person name="Zhao W."/>
            <person name="Sun Y."/>
            <person name="Zhang Z."/>
            <person name="Bao J."/>
            <person name="Han Y."/>
            <person name="Dong L."/>
            <person name="Ji J."/>
            <person name="Chen P."/>
            <person name="Wu S."/>
            <person name="Liu J."/>
            <person name="Xiao Y."/>
            <person name="Bu D."/>
            <person name="Tan J."/>
            <person name="Yang L."/>
            <person name="Ye C."/>
            <person name="Zhang J."/>
            <person name="Xu J."/>
            <person name="Zhou Y."/>
            <person name="Yu Y."/>
            <person name="Zhang B."/>
            <person name="Zhuang S."/>
            <person name="Wei H."/>
            <person name="Liu B."/>
            <person name="Lei M."/>
            <person name="Yu H."/>
            <person name="Li Y."/>
            <person name="Xu H."/>
            <person name="Wei S."/>
            <person name="He X."/>
            <person name="Fang L."/>
            <person name="Zhang Z."/>
            <person name="Zhang Y."/>
            <person name="Huang X."/>
            <person name="Su Z."/>
            <person name="Tong W."/>
            <person name="Li J."/>
            <person name="Tong Z."/>
            <person name="Li S."/>
            <person name="Ye J."/>
            <person name="Wang L."/>
            <person name="Fang L."/>
            <person name="Lei T."/>
            <person name="Chen C.-S."/>
            <person name="Chen H.-C."/>
            <person name="Xu Z."/>
            <person name="Li H."/>
            <person name="Huang H."/>
            <person name="Zhang F."/>
            <person name="Xu H."/>
            <person name="Li N."/>
            <person name="Zhao C."/>
            <person name="Li S."/>
            <person name="Dong L."/>
            <person name="Huang Y."/>
            <person name="Li L."/>
            <person name="Xi Y."/>
            <person name="Qi Q."/>
            <person name="Li W."/>
            <person name="Zhang B."/>
            <person name="Hu W."/>
            <person name="Zhang Y."/>
            <person name="Tian X."/>
            <person name="Jiao Y."/>
            <person name="Liang X."/>
            <person name="Jin J."/>
            <person name="Gao L."/>
            <person name="Zheng W."/>
            <person name="Hao B."/>
            <person name="Liu S.-M."/>
            <person name="Wang W."/>
            <person name="Yuan L."/>
            <person name="Cao M."/>
            <person name="McDermott J."/>
            <person name="Samudrala R."/>
            <person name="Wang J."/>
            <person name="Wong G.K.-S."/>
            <person name="Yang H."/>
        </authorList>
    </citation>
    <scope>NUCLEOTIDE SEQUENCE [LARGE SCALE GENOMIC DNA]</scope>
    <source>
        <strain>cv. Nipponbare</strain>
    </source>
</reference>
<reference key="5">
    <citation type="journal article" date="2003" name="Science">
        <title>Collection, mapping, and annotation of over 28,000 cDNA clones from japonica rice.</title>
        <authorList>
            <consortium name="The rice full-length cDNA consortium"/>
        </authorList>
    </citation>
    <scope>NUCLEOTIDE SEQUENCE [LARGE SCALE MRNA]</scope>
    <source>
        <strain>cv. Nipponbare</strain>
    </source>
</reference>
<reference key="6">
    <citation type="journal article" date="2009" name="Plant Mol. Biol.">
        <title>Identification and expression profiling analysis of TIFY family genes involved in stress and phytohormone responses in rice.</title>
        <authorList>
            <person name="Ye H."/>
            <person name="Du H."/>
            <person name="Tang N."/>
            <person name="Li X."/>
            <person name="Xiong L."/>
        </authorList>
    </citation>
    <scope>GENE FAMILY</scope>
    <scope>NOMENCLATURE</scope>
    <scope>INDUCTION</scope>
</reference>
<reference key="7">
    <citation type="journal article" date="2011" name="Plant J.">
        <title>OsbHLH148, a basic helix-loop-helix protein, interacts with OsJAZ proteins in a jasmonate signaling pathway leading to drought tolerance in rice.</title>
        <authorList>
            <person name="Seo J.S."/>
            <person name="Joo J."/>
            <person name="Kim M.J."/>
            <person name="Kim Y.K."/>
            <person name="Nahm B.H."/>
            <person name="Song S.I."/>
            <person name="Cheong J.J."/>
            <person name="Lee J.S."/>
            <person name="Kim J.K."/>
            <person name="Choi Y.D."/>
        </authorList>
    </citation>
    <scope>INTERACTION WITH COI1A</scope>
    <scope>INDUCTION</scope>
</reference>
<reference key="8">
    <citation type="journal article" date="2013" name="PLoS ONE">
        <title>Oryza sativa COI homologues restore jasmonate signal transduction in Arabidopsis coi1-1 mutants.</title>
        <authorList>
            <person name="Lee H.Y."/>
            <person name="Seo J.S."/>
            <person name="Cho J.H."/>
            <person name="Jung H."/>
            <person name="Kim J.K."/>
            <person name="Lee J.S."/>
            <person name="Rhee S."/>
            <person name="Do Choi Y."/>
        </authorList>
    </citation>
    <scope>INTERACTION WITH COI1A AND COI1B</scope>
    <scope>TISSUE SPECIFICITY</scope>
</reference>
<accession>Q6ES51</accession>
<accession>A0A0P0XLY1</accession>
<organism>
    <name type="scientific">Oryza sativa subsp. japonica</name>
    <name type="common">Rice</name>
    <dbReference type="NCBI Taxonomy" id="39947"/>
    <lineage>
        <taxon>Eukaryota</taxon>
        <taxon>Viridiplantae</taxon>
        <taxon>Streptophyta</taxon>
        <taxon>Embryophyta</taxon>
        <taxon>Tracheophyta</taxon>
        <taxon>Spermatophyta</taxon>
        <taxon>Magnoliopsida</taxon>
        <taxon>Liliopsida</taxon>
        <taxon>Poales</taxon>
        <taxon>Poaceae</taxon>
        <taxon>BOP clade</taxon>
        <taxon>Oryzoideae</taxon>
        <taxon>Oryzeae</taxon>
        <taxon>Oryzinae</taxon>
        <taxon>Oryza</taxon>
        <taxon>Oryza sativa</taxon>
    </lineage>
</organism>
<proteinExistence type="evidence at protein level"/>
<evidence type="ECO:0000250" key="1">
    <source>
        <dbReference type="UniProtKB" id="Q7XPM8"/>
    </source>
</evidence>
<evidence type="ECO:0000255" key="2"/>
<evidence type="ECO:0000255" key="3">
    <source>
        <dbReference type="PROSITE-ProRule" id="PRU00650"/>
    </source>
</evidence>
<evidence type="ECO:0000255" key="4">
    <source>
        <dbReference type="PROSITE-ProRule" id="PRU00768"/>
    </source>
</evidence>
<evidence type="ECO:0000256" key="5">
    <source>
        <dbReference type="SAM" id="MobiDB-lite"/>
    </source>
</evidence>
<evidence type="ECO:0000269" key="6">
    <source>
    </source>
</evidence>
<evidence type="ECO:0000269" key="7">
    <source>
    </source>
</evidence>
<evidence type="ECO:0000269" key="8">
    <source>
    </source>
</evidence>
<evidence type="ECO:0000303" key="9">
    <source>
    </source>
</evidence>
<evidence type="ECO:0000303" key="10">
    <source>
    </source>
</evidence>
<evidence type="ECO:0000305" key="11"/>
<evidence type="ECO:0000312" key="12">
    <source>
        <dbReference type="EMBL" id="BAD28519.1"/>
    </source>
</evidence>
<evidence type="ECO:0000312" key="13">
    <source>
        <dbReference type="EMBL" id="BAF25035.1"/>
    </source>
</evidence>
<evidence type="ECO:0000312" key="14">
    <source>
        <dbReference type="EMBL" id="EEE69666.1"/>
    </source>
</evidence>
<feature type="chain" id="PRO_0000434844" description="Protein TIFY 6b">
    <location>
        <begin position="1"/>
        <end position="416"/>
    </location>
</feature>
<feature type="domain" description="Tify" evidence="3">
    <location>
        <begin position="187"/>
        <end position="222"/>
    </location>
</feature>
<feature type="region of interest" description="Disordered" evidence="5">
    <location>
        <begin position="1"/>
        <end position="25"/>
    </location>
</feature>
<feature type="region of interest" description="Disordered" evidence="5">
    <location>
        <begin position="283"/>
        <end position="319"/>
    </location>
</feature>
<feature type="region of interest" description="Disordered" evidence="5">
    <location>
        <begin position="357"/>
        <end position="416"/>
    </location>
</feature>
<feature type="short sequence motif" description="Jas" evidence="2">
    <location>
        <begin position="335"/>
        <end position="359"/>
    </location>
</feature>
<feature type="short sequence motif" description="Nuclear localization signal" evidence="4">
    <location>
        <begin position="337"/>
        <end position="344"/>
    </location>
</feature>
<feature type="compositionally biased region" description="Polar residues" evidence="5">
    <location>
        <begin position="283"/>
        <end position="302"/>
    </location>
</feature>
<feature type="compositionally biased region" description="Pro residues" evidence="5">
    <location>
        <begin position="306"/>
        <end position="317"/>
    </location>
</feature>
<feature type="compositionally biased region" description="Polar residues" evidence="5">
    <location>
        <begin position="366"/>
        <end position="389"/>
    </location>
</feature>
<gene>
    <name evidence="9" type="primary">TIFY6B</name>
    <name evidence="9" type="synonym">JAZ4</name>
    <name evidence="13" type="ordered locus">Os09g0401300</name>
    <name type="ordered locus">LOC_Os09g23660</name>
    <name evidence="14" type="ORF">OsJ_29291</name>
    <name evidence="12" type="ORF">P0650H04.35-1</name>
</gene>
<keyword id="KW-1184">Jasmonic acid signaling pathway</keyword>
<keyword id="KW-0539">Nucleus</keyword>
<keyword id="KW-1185">Reference proteome</keyword>
<keyword id="KW-0804">Transcription</keyword>
<keyword id="KW-0805">Transcription regulation</keyword>
<keyword id="KW-0832">Ubl conjugation</keyword>
<name>TIF6B_ORYSJ</name>
<comment type="function">
    <text evidence="1">Repressor of jasmonate responses.</text>
</comment>
<comment type="subunit">
    <text evidence="7 8">Interacts with COI1A (PubMed:21332845). Interacts with COI1A and COI1B in a coronatine-dependent manner. Coronatine is an analog of jasmonoyl isoleucine (JA-Ile) (PubMed:23320078).</text>
</comment>
<comment type="subcellular location">
    <subcellularLocation>
        <location evidence="4">Nucleus</location>
    </subcellularLocation>
</comment>
<comment type="tissue specificity">
    <text evidence="8">Expressed in roots, shoots, leaf sheaths and leaf blades.</text>
</comment>
<comment type="induction">
    <text evidence="6 7">By methyl jasmonate (MeJA) (PubMed:21332845). Induced by drought and salt stresses (PubMed:19618278).</text>
</comment>
<comment type="domain">
    <text evidence="1">The jas domain (335-359) is required for interaction with COI1.</text>
</comment>
<comment type="PTM">
    <text evidence="1">Ubiquitinated. Targeted for degradation by the SCF(COI1) E3 ubiquitin ligase-proteasome pathway during jasmonate signaling.</text>
</comment>
<comment type="similarity">
    <text evidence="11">Belongs to the TIFY/JAZ family.</text>
</comment>